<keyword id="KW-0067">ATP-binding</keyword>
<keyword id="KW-0315">Glutamine amidotransferase</keyword>
<keyword id="KW-0436">Ligase</keyword>
<keyword id="KW-0460">Magnesium</keyword>
<keyword id="KW-0479">Metal-binding</keyword>
<keyword id="KW-0547">Nucleotide-binding</keyword>
<keyword id="KW-0665">Pyrimidine biosynthesis</keyword>
<feature type="chain" id="PRO_1000139523" description="CTP synthase">
    <location>
        <begin position="1"/>
        <end position="536"/>
    </location>
</feature>
<feature type="domain" description="Glutamine amidotransferase type-1" evidence="1">
    <location>
        <begin position="292"/>
        <end position="534"/>
    </location>
</feature>
<feature type="region of interest" description="Amidoligase domain" evidence="1">
    <location>
        <begin position="1"/>
        <end position="267"/>
    </location>
</feature>
<feature type="active site" description="Nucleophile; for glutamine hydrolysis" evidence="1">
    <location>
        <position position="381"/>
    </location>
</feature>
<feature type="active site" evidence="1">
    <location>
        <position position="507"/>
    </location>
</feature>
<feature type="active site" evidence="1">
    <location>
        <position position="509"/>
    </location>
</feature>
<feature type="binding site" evidence="1">
    <location>
        <position position="13"/>
    </location>
    <ligand>
        <name>CTP</name>
        <dbReference type="ChEBI" id="CHEBI:37563"/>
        <note>allosteric inhibitor</note>
    </ligand>
</feature>
<feature type="binding site" evidence="1">
    <location>
        <position position="13"/>
    </location>
    <ligand>
        <name>UTP</name>
        <dbReference type="ChEBI" id="CHEBI:46398"/>
    </ligand>
</feature>
<feature type="binding site" evidence="1">
    <location>
        <begin position="14"/>
        <end position="19"/>
    </location>
    <ligand>
        <name>ATP</name>
        <dbReference type="ChEBI" id="CHEBI:30616"/>
    </ligand>
</feature>
<feature type="binding site" evidence="1">
    <location>
        <position position="71"/>
    </location>
    <ligand>
        <name>ATP</name>
        <dbReference type="ChEBI" id="CHEBI:30616"/>
    </ligand>
</feature>
<feature type="binding site" evidence="1">
    <location>
        <position position="71"/>
    </location>
    <ligand>
        <name>Mg(2+)</name>
        <dbReference type="ChEBI" id="CHEBI:18420"/>
    </ligand>
</feature>
<feature type="binding site" evidence="1">
    <location>
        <position position="141"/>
    </location>
    <ligand>
        <name>Mg(2+)</name>
        <dbReference type="ChEBI" id="CHEBI:18420"/>
    </ligand>
</feature>
<feature type="binding site" evidence="1">
    <location>
        <begin position="148"/>
        <end position="150"/>
    </location>
    <ligand>
        <name>CTP</name>
        <dbReference type="ChEBI" id="CHEBI:37563"/>
        <note>allosteric inhibitor</note>
    </ligand>
</feature>
<feature type="binding site" evidence="1">
    <location>
        <begin position="188"/>
        <end position="193"/>
    </location>
    <ligand>
        <name>CTP</name>
        <dbReference type="ChEBI" id="CHEBI:37563"/>
        <note>allosteric inhibitor</note>
    </ligand>
</feature>
<feature type="binding site" evidence="1">
    <location>
        <begin position="188"/>
        <end position="193"/>
    </location>
    <ligand>
        <name>UTP</name>
        <dbReference type="ChEBI" id="CHEBI:46398"/>
    </ligand>
</feature>
<feature type="binding site" evidence="1">
    <location>
        <position position="224"/>
    </location>
    <ligand>
        <name>CTP</name>
        <dbReference type="ChEBI" id="CHEBI:37563"/>
        <note>allosteric inhibitor</note>
    </ligand>
</feature>
<feature type="binding site" evidence="1">
    <location>
        <position position="224"/>
    </location>
    <ligand>
        <name>UTP</name>
        <dbReference type="ChEBI" id="CHEBI:46398"/>
    </ligand>
</feature>
<feature type="binding site" evidence="1">
    <location>
        <position position="354"/>
    </location>
    <ligand>
        <name>L-glutamine</name>
        <dbReference type="ChEBI" id="CHEBI:58359"/>
    </ligand>
</feature>
<feature type="binding site" evidence="1">
    <location>
        <begin position="382"/>
        <end position="385"/>
    </location>
    <ligand>
        <name>L-glutamine</name>
        <dbReference type="ChEBI" id="CHEBI:58359"/>
    </ligand>
</feature>
<feature type="binding site" evidence="1">
    <location>
        <position position="405"/>
    </location>
    <ligand>
        <name>L-glutamine</name>
        <dbReference type="ChEBI" id="CHEBI:58359"/>
    </ligand>
</feature>
<feature type="binding site" evidence="1">
    <location>
        <position position="462"/>
    </location>
    <ligand>
        <name>L-glutamine</name>
        <dbReference type="ChEBI" id="CHEBI:58359"/>
    </ligand>
</feature>
<organism>
    <name type="scientific">Prochlorococcus marinus (strain MIT 9215)</name>
    <dbReference type="NCBI Taxonomy" id="93060"/>
    <lineage>
        <taxon>Bacteria</taxon>
        <taxon>Bacillati</taxon>
        <taxon>Cyanobacteriota</taxon>
        <taxon>Cyanophyceae</taxon>
        <taxon>Synechococcales</taxon>
        <taxon>Prochlorococcaceae</taxon>
        <taxon>Prochlorococcus</taxon>
    </lineage>
</organism>
<protein>
    <recommendedName>
        <fullName evidence="1">CTP synthase</fullName>
        <ecNumber evidence="1">6.3.4.2</ecNumber>
    </recommendedName>
    <alternativeName>
        <fullName evidence="1">Cytidine 5'-triphosphate synthase</fullName>
    </alternativeName>
    <alternativeName>
        <fullName evidence="1">Cytidine triphosphate synthetase</fullName>
        <shortName evidence="1">CTP synthetase</shortName>
        <shortName evidence="1">CTPS</shortName>
    </alternativeName>
    <alternativeName>
        <fullName evidence="1">UTP--ammonia ligase</fullName>
    </alternativeName>
</protein>
<evidence type="ECO:0000255" key="1">
    <source>
        <dbReference type="HAMAP-Rule" id="MF_01227"/>
    </source>
</evidence>
<comment type="function">
    <text evidence="1">Catalyzes the ATP-dependent amination of UTP to CTP with either L-glutamine or ammonia as the source of nitrogen. Regulates intracellular CTP levels through interactions with the four ribonucleotide triphosphates.</text>
</comment>
<comment type="catalytic activity">
    <reaction evidence="1">
        <text>UTP + L-glutamine + ATP + H2O = CTP + L-glutamate + ADP + phosphate + 2 H(+)</text>
        <dbReference type="Rhea" id="RHEA:26426"/>
        <dbReference type="ChEBI" id="CHEBI:15377"/>
        <dbReference type="ChEBI" id="CHEBI:15378"/>
        <dbReference type="ChEBI" id="CHEBI:29985"/>
        <dbReference type="ChEBI" id="CHEBI:30616"/>
        <dbReference type="ChEBI" id="CHEBI:37563"/>
        <dbReference type="ChEBI" id="CHEBI:43474"/>
        <dbReference type="ChEBI" id="CHEBI:46398"/>
        <dbReference type="ChEBI" id="CHEBI:58359"/>
        <dbReference type="ChEBI" id="CHEBI:456216"/>
        <dbReference type="EC" id="6.3.4.2"/>
    </reaction>
</comment>
<comment type="catalytic activity">
    <reaction evidence="1">
        <text>L-glutamine + H2O = L-glutamate + NH4(+)</text>
        <dbReference type="Rhea" id="RHEA:15889"/>
        <dbReference type="ChEBI" id="CHEBI:15377"/>
        <dbReference type="ChEBI" id="CHEBI:28938"/>
        <dbReference type="ChEBI" id="CHEBI:29985"/>
        <dbReference type="ChEBI" id="CHEBI:58359"/>
    </reaction>
</comment>
<comment type="catalytic activity">
    <reaction evidence="1">
        <text>UTP + NH4(+) + ATP = CTP + ADP + phosphate + 2 H(+)</text>
        <dbReference type="Rhea" id="RHEA:16597"/>
        <dbReference type="ChEBI" id="CHEBI:15378"/>
        <dbReference type="ChEBI" id="CHEBI:28938"/>
        <dbReference type="ChEBI" id="CHEBI:30616"/>
        <dbReference type="ChEBI" id="CHEBI:37563"/>
        <dbReference type="ChEBI" id="CHEBI:43474"/>
        <dbReference type="ChEBI" id="CHEBI:46398"/>
        <dbReference type="ChEBI" id="CHEBI:456216"/>
    </reaction>
</comment>
<comment type="activity regulation">
    <text evidence="1">Allosterically activated by GTP, when glutamine is the substrate; GTP has no effect on the reaction when ammonia is the substrate. The allosteric effector GTP functions by stabilizing the protein conformation that binds the tetrahedral intermediate(s) formed during glutamine hydrolysis. Inhibited by the product CTP, via allosteric rather than competitive inhibition.</text>
</comment>
<comment type="pathway">
    <text evidence="1">Pyrimidine metabolism; CTP biosynthesis via de novo pathway; CTP from UDP: step 2/2.</text>
</comment>
<comment type="subunit">
    <text evidence="1">Homotetramer.</text>
</comment>
<comment type="miscellaneous">
    <text evidence="1">CTPSs have evolved a hybrid strategy for distinguishing between UTP and CTP. The overlapping regions of the product feedback inhibitory and substrate sites recognize a common feature in both compounds, the triphosphate moiety. To differentiate isosteric substrate and product pyrimidine rings, an additional pocket far from the expected kinase/ligase catalytic site, specifically recognizes the cytosine and ribose portions of the product inhibitor.</text>
</comment>
<comment type="similarity">
    <text evidence="1">Belongs to the CTP synthase family.</text>
</comment>
<sequence>MSKFVFVTGGVVSSIGKGIVAASLGRLLKSRGYSVSILKLDPYLNVDPGTMSPFQHGEVFVTEDGAETDLDLGHYERFTDTAMTRLNSVTTGSIYQAVINKERRGSYNGGTVQVIPHITGEIRERIHRVAANSNADIIITEIGGTVGDIESLPFLEAIREFKNDVNRNDVAYIHVTLLPFIKTSGEIKTKPTQHSVKELRSIGIQPDLLVCRSDKSINEGLKKKLSGFCGVNIKSVIEALDADSIYSVPLALKKEGLCKETLKYLELEDKECDLKNWEALIHNLRNPGDPIKVALVGKYIELGDAYLSVVEALRHACIEKKASLDLHWVSAEMIEKGSAETYLKEVDAIVVPGGFGNRGVNGKISAIKFAREKKIPFLGLCLGMQCAVIEWARNVANLPDASSSELNPDTPNPVIHLLPEQEDVVDLGGTMRLGVYPCRLTNNTTGKKLYDEDVIYERHRHRYEFNNYYKQSFLNSGYKISGTSPDGRLVELIELENHPYFLACQYHPEFLSRPGKPHPLFQGLIKASQEKLTQSN</sequence>
<reference key="1">
    <citation type="journal article" date="2007" name="PLoS Genet.">
        <title>Patterns and implications of gene gain and loss in the evolution of Prochlorococcus.</title>
        <authorList>
            <person name="Kettler G.C."/>
            <person name="Martiny A.C."/>
            <person name="Huang K."/>
            <person name="Zucker J."/>
            <person name="Coleman M.L."/>
            <person name="Rodrigue S."/>
            <person name="Chen F."/>
            <person name="Lapidus A."/>
            <person name="Ferriera S."/>
            <person name="Johnson J."/>
            <person name="Steglich C."/>
            <person name="Church G.M."/>
            <person name="Richardson P."/>
            <person name="Chisholm S.W."/>
        </authorList>
    </citation>
    <scope>NUCLEOTIDE SEQUENCE [LARGE SCALE GENOMIC DNA]</scope>
    <source>
        <strain>MIT 9215</strain>
    </source>
</reference>
<name>PYRG_PROM2</name>
<accession>A8G7J4</accession>
<dbReference type="EC" id="6.3.4.2" evidence="1"/>
<dbReference type="EMBL" id="CP000825">
    <property type="protein sequence ID" value="ABV51575.1"/>
    <property type="molecule type" value="Genomic_DNA"/>
</dbReference>
<dbReference type="RefSeq" id="WP_012008562.1">
    <property type="nucleotide sequence ID" value="NC_009840.1"/>
</dbReference>
<dbReference type="SMR" id="A8G7J4"/>
<dbReference type="STRING" id="93060.P9215_19621"/>
<dbReference type="KEGG" id="pmh:P9215_19621"/>
<dbReference type="eggNOG" id="COG0504">
    <property type="taxonomic scope" value="Bacteria"/>
</dbReference>
<dbReference type="HOGENOM" id="CLU_011675_5_0_3"/>
<dbReference type="OrthoDB" id="9801107at2"/>
<dbReference type="UniPathway" id="UPA00159">
    <property type="reaction ID" value="UER00277"/>
</dbReference>
<dbReference type="Proteomes" id="UP000002014">
    <property type="component" value="Chromosome"/>
</dbReference>
<dbReference type="GO" id="GO:0005829">
    <property type="term" value="C:cytosol"/>
    <property type="evidence" value="ECO:0007669"/>
    <property type="project" value="TreeGrafter"/>
</dbReference>
<dbReference type="GO" id="GO:0005524">
    <property type="term" value="F:ATP binding"/>
    <property type="evidence" value="ECO:0007669"/>
    <property type="project" value="UniProtKB-KW"/>
</dbReference>
<dbReference type="GO" id="GO:0003883">
    <property type="term" value="F:CTP synthase activity"/>
    <property type="evidence" value="ECO:0007669"/>
    <property type="project" value="UniProtKB-UniRule"/>
</dbReference>
<dbReference type="GO" id="GO:0004359">
    <property type="term" value="F:glutaminase activity"/>
    <property type="evidence" value="ECO:0007669"/>
    <property type="project" value="RHEA"/>
</dbReference>
<dbReference type="GO" id="GO:0042802">
    <property type="term" value="F:identical protein binding"/>
    <property type="evidence" value="ECO:0007669"/>
    <property type="project" value="TreeGrafter"/>
</dbReference>
<dbReference type="GO" id="GO:0046872">
    <property type="term" value="F:metal ion binding"/>
    <property type="evidence" value="ECO:0007669"/>
    <property type="project" value="UniProtKB-KW"/>
</dbReference>
<dbReference type="GO" id="GO:0044210">
    <property type="term" value="P:'de novo' CTP biosynthetic process"/>
    <property type="evidence" value="ECO:0007669"/>
    <property type="project" value="UniProtKB-UniRule"/>
</dbReference>
<dbReference type="GO" id="GO:0019856">
    <property type="term" value="P:pyrimidine nucleobase biosynthetic process"/>
    <property type="evidence" value="ECO:0007669"/>
    <property type="project" value="TreeGrafter"/>
</dbReference>
<dbReference type="CDD" id="cd03113">
    <property type="entry name" value="CTPS_N"/>
    <property type="match status" value="1"/>
</dbReference>
<dbReference type="CDD" id="cd01746">
    <property type="entry name" value="GATase1_CTP_Synthase"/>
    <property type="match status" value="1"/>
</dbReference>
<dbReference type="FunFam" id="3.40.50.300:FF:000009">
    <property type="entry name" value="CTP synthase"/>
    <property type="match status" value="1"/>
</dbReference>
<dbReference type="FunFam" id="3.40.50.880:FF:000002">
    <property type="entry name" value="CTP synthase"/>
    <property type="match status" value="1"/>
</dbReference>
<dbReference type="Gene3D" id="3.40.50.880">
    <property type="match status" value="1"/>
</dbReference>
<dbReference type="Gene3D" id="3.40.50.300">
    <property type="entry name" value="P-loop containing nucleotide triphosphate hydrolases"/>
    <property type="match status" value="1"/>
</dbReference>
<dbReference type="HAMAP" id="MF_01227">
    <property type="entry name" value="PyrG"/>
    <property type="match status" value="1"/>
</dbReference>
<dbReference type="InterPro" id="IPR029062">
    <property type="entry name" value="Class_I_gatase-like"/>
</dbReference>
<dbReference type="InterPro" id="IPR004468">
    <property type="entry name" value="CTP_synthase"/>
</dbReference>
<dbReference type="InterPro" id="IPR017456">
    <property type="entry name" value="CTP_synthase_N"/>
</dbReference>
<dbReference type="InterPro" id="IPR017926">
    <property type="entry name" value="GATASE"/>
</dbReference>
<dbReference type="InterPro" id="IPR033828">
    <property type="entry name" value="GATase1_CTP_Synthase"/>
</dbReference>
<dbReference type="InterPro" id="IPR027417">
    <property type="entry name" value="P-loop_NTPase"/>
</dbReference>
<dbReference type="NCBIfam" id="NF003792">
    <property type="entry name" value="PRK05380.1"/>
    <property type="match status" value="1"/>
</dbReference>
<dbReference type="NCBIfam" id="TIGR00337">
    <property type="entry name" value="PyrG"/>
    <property type="match status" value="1"/>
</dbReference>
<dbReference type="PANTHER" id="PTHR11550">
    <property type="entry name" value="CTP SYNTHASE"/>
    <property type="match status" value="1"/>
</dbReference>
<dbReference type="PANTHER" id="PTHR11550:SF0">
    <property type="entry name" value="CTP SYNTHASE-RELATED"/>
    <property type="match status" value="1"/>
</dbReference>
<dbReference type="Pfam" id="PF06418">
    <property type="entry name" value="CTP_synth_N"/>
    <property type="match status" value="1"/>
</dbReference>
<dbReference type="Pfam" id="PF00117">
    <property type="entry name" value="GATase"/>
    <property type="match status" value="1"/>
</dbReference>
<dbReference type="SUPFAM" id="SSF52317">
    <property type="entry name" value="Class I glutamine amidotransferase-like"/>
    <property type="match status" value="1"/>
</dbReference>
<dbReference type="SUPFAM" id="SSF52540">
    <property type="entry name" value="P-loop containing nucleoside triphosphate hydrolases"/>
    <property type="match status" value="1"/>
</dbReference>
<dbReference type="PROSITE" id="PS51273">
    <property type="entry name" value="GATASE_TYPE_1"/>
    <property type="match status" value="1"/>
</dbReference>
<gene>
    <name evidence="1" type="primary">pyrG</name>
    <name type="ordered locus">P9215_19621</name>
</gene>
<proteinExistence type="inferred from homology"/>